<evidence type="ECO:0000250" key="1"/>
<evidence type="ECO:0000255" key="2"/>
<evidence type="ECO:0000255" key="3">
    <source>
        <dbReference type="PROSITE-ProRule" id="PRU00043"/>
    </source>
</evidence>
<evidence type="ECO:0000255" key="4">
    <source>
        <dbReference type="PROSITE-ProRule" id="PRU00076"/>
    </source>
</evidence>
<evidence type="ECO:0000255" key="5">
    <source>
        <dbReference type="PROSITE-ProRule" id="PRU00122"/>
    </source>
</evidence>
<evidence type="ECO:0000269" key="6">
    <source>
    </source>
</evidence>
<evidence type="ECO:0000269" key="7">
    <source>
    </source>
</evidence>
<evidence type="ECO:0000303" key="8">
    <source>
    </source>
</evidence>
<evidence type="ECO:0000305" key="9"/>
<evidence type="ECO:0000312" key="10">
    <source>
        <dbReference type="EMBL" id="AAL28503.1"/>
    </source>
</evidence>
<dbReference type="EMBL" id="AE014296">
    <property type="protein sequence ID" value="AAF49078.3"/>
    <property type="molecule type" value="Genomic_DNA"/>
</dbReference>
<dbReference type="EMBL" id="AE014296">
    <property type="protein sequence ID" value="AAZ66056.2"/>
    <property type="molecule type" value="Genomic_DNA"/>
</dbReference>
<dbReference type="EMBL" id="AY060955">
    <property type="protein sequence ID" value="AAL28503.1"/>
    <property type="status" value="ALT_INIT"/>
    <property type="molecule type" value="mRNA"/>
</dbReference>
<dbReference type="EMBL" id="AY118666">
    <property type="protein sequence ID" value="AAM50035.1"/>
    <property type="status" value="ALT_SEQ"/>
    <property type="molecule type" value="mRNA"/>
</dbReference>
<dbReference type="RefSeq" id="NP_001027138.2">
    <molecule id="Q9VW71-1"/>
    <property type="nucleotide sequence ID" value="NM_001031967.2"/>
</dbReference>
<dbReference type="RefSeq" id="NP_001287126.1">
    <molecule id="Q9VW71-2"/>
    <property type="nucleotide sequence ID" value="NM_001300197.1"/>
</dbReference>
<dbReference type="RefSeq" id="NP_649171.3">
    <molecule id="Q9VW71-2"/>
    <property type="nucleotide sequence ID" value="NM_140914.3"/>
</dbReference>
<dbReference type="SMR" id="Q9VW71"/>
<dbReference type="BioGRID" id="65458">
    <property type="interactions" value="5"/>
</dbReference>
<dbReference type="DIP" id="DIP-24050N"/>
<dbReference type="FunCoup" id="Q9VW71">
    <property type="interactions" value="355"/>
</dbReference>
<dbReference type="IntAct" id="Q9VW71">
    <property type="interactions" value="7"/>
</dbReference>
<dbReference type="STRING" id="7227.FBpp0304968"/>
<dbReference type="GlyCosmos" id="Q9VW71">
    <property type="glycosylation" value="12 sites, No reported glycans"/>
</dbReference>
<dbReference type="GlyGen" id="Q9VW71">
    <property type="glycosylation" value="12 sites"/>
</dbReference>
<dbReference type="PaxDb" id="7227-FBpp0304968"/>
<dbReference type="EnsemblMetazoa" id="FBtr0332721">
    <molecule id="Q9VW71-2"/>
    <property type="protein sequence ID" value="FBpp0304967"/>
    <property type="gene ID" value="FBgn0261574"/>
</dbReference>
<dbReference type="EnsemblMetazoa" id="FBtr0332722">
    <molecule id="Q9VW71-1"/>
    <property type="protein sequence ID" value="FBpp0304968"/>
    <property type="gene ID" value="FBgn0261574"/>
</dbReference>
<dbReference type="EnsemblMetazoa" id="FBtr0346077">
    <molecule id="Q9VW71-2"/>
    <property type="protein sequence ID" value="FBpp0311915"/>
    <property type="gene ID" value="FBgn0261574"/>
</dbReference>
<dbReference type="GeneID" id="40191"/>
<dbReference type="KEGG" id="dme:Dmel_CG7749"/>
<dbReference type="UCSC" id="CG7749-RA">
    <molecule id="Q9VW71-1"/>
    <property type="organism name" value="d. melanogaster"/>
</dbReference>
<dbReference type="AGR" id="FB:FBgn0261574"/>
<dbReference type="CTD" id="40191"/>
<dbReference type="FlyBase" id="FBgn0261574">
    <property type="gene designation" value="kug"/>
</dbReference>
<dbReference type="VEuPathDB" id="VectorBase:FBgn0261574"/>
<dbReference type="eggNOG" id="KOG1219">
    <property type="taxonomic scope" value="Eukaryota"/>
</dbReference>
<dbReference type="GeneTree" id="ENSGT00940000166124"/>
<dbReference type="InParanoid" id="Q9VW71"/>
<dbReference type="OMA" id="YSSLYYE"/>
<dbReference type="OrthoDB" id="6252479at2759"/>
<dbReference type="BioGRID-ORCS" id="40191">
    <property type="hits" value="0 hits in 3 CRISPR screens"/>
</dbReference>
<dbReference type="GenomeRNAi" id="40191"/>
<dbReference type="PRO" id="PR:Q9VW71"/>
<dbReference type="Proteomes" id="UP000000803">
    <property type="component" value="Chromosome 3L"/>
</dbReference>
<dbReference type="Bgee" id="FBgn0261574">
    <property type="expression patterns" value="Expressed in lamina wide-field cell (Drosophila) in insect head and 204 other cell types or tissues"/>
</dbReference>
<dbReference type="ExpressionAtlas" id="Q9VW71">
    <property type="expression patterns" value="baseline and differential"/>
</dbReference>
<dbReference type="GO" id="GO:0098858">
    <property type="term" value="C:actin-based cell projection"/>
    <property type="evidence" value="ECO:0000314"/>
    <property type="project" value="FlyBase"/>
</dbReference>
<dbReference type="GO" id="GO:0009925">
    <property type="term" value="C:basal plasma membrane"/>
    <property type="evidence" value="ECO:0000314"/>
    <property type="project" value="FlyBase"/>
</dbReference>
<dbReference type="GO" id="GO:0031254">
    <property type="term" value="C:cell trailing edge"/>
    <property type="evidence" value="ECO:0000314"/>
    <property type="project" value="FlyBase"/>
</dbReference>
<dbReference type="GO" id="GO:0005925">
    <property type="term" value="C:focal adhesion"/>
    <property type="evidence" value="ECO:0000314"/>
    <property type="project" value="FlyBase"/>
</dbReference>
<dbReference type="GO" id="GO:0005886">
    <property type="term" value="C:plasma membrane"/>
    <property type="evidence" value="ECO:0000314"/>
    <property type="project" value="UniProtKB"/>
</dbReference>
<dbReference type="GO" id="GO:0005509">
    <property type="term" value="F:calcium ion binding"/>
    <property type="evidence" value="ECO:0000255"/>
    <property type="project" value="FlyBase"/>
</dbReference>
<dbReference type="GO" id="GO:0050839">
    <property type="term" value="F:cell adhesion molecule binding"/>
    <property type="evidence" value="ECO:0000353"/>
    <property type="project" value="FlyBase"/>
</dbReference>
<dbReference type="GO" id="GO:0044877">
    <property type="term" value="F:protein-containing complex binding"/>
    <property type="evidence" value="ECO:0000353"/>
    <property type="project" value="FlyBase"/>
</dbReference>
<dbReference type="GO" id="GO:0016339">
    <property type="term" value="P:calcium-dependent cell-cell adhesion via plasma membrane cell adhesion molecules"/>
    <property type="evidence" value="ECO:0000250"/>
    <property type="project" value="FlyBase"/>
</dbReference>
<dbReference type="GO" id="GO:0098609">
    <property type="term" value="P:cell-cell adhesion"/>
    <property type="evidence" value="ECO:0000318"/>
    <property type="project" value="GO_Central"/>
</dbReference>
<dbReference type="GO" id="GO:0044331">
    <property type="term" value="P:cell-cell adhesion mediated by cadherin"/>
    <property type="evidence" value="ECO:0000255"/>
    <property type="project" value="FlyBase"/>
</dbReference>
<dbReference type="GO" id="GO:0060269">
    <property type="term" value="P:centripetally migrating follicle cell migration"/>
    <property type="evidence" value="ECO:0000315"/>
    <property type="project" value="FlyBase"/>
</dbReference>
<dbReference type="GO" id="GO:0050829">
    <property type="term" value="P:defense response to Gram-negative bacterium"/>
    <property type="evidence" value="ECO:0007001"/>
    <property type="project" value="FlyBase"/>
</dbReference>
<dbReference type="GO" id="GO:0042247">
    <property type="term" value="P:establishment of planar polarity of follicular epithelium"/>
    <property type="evidence" value="ECO:0000315"/>
    <property type="project" value="UniProtKB"/>
</dbReference>
<dbReference type="GO" id="GO:0030950">
    <property type="term" value="P:establishment or maintenance of actin cytoskeleton polarity"/>
    <property type="evidence" value="ECO:0000315"/>
    <property type="project" value="FlyBase"/>
</dbReference>
<dbReference type="GO" id="GO:0007440">
    <property type="term" value="P:foregut morphogenesis"/>
    <property type="evidence" value="ECO:0000315"/>
    <property type="project" value="FlyBase"/>
</dbReference>
<dbReference type="GO" id="GO:0007295">
    <property type="term" value="P:growth of a germarium-derived egg chamber"/>
    <property type="evidence" value="ECO:0000315"/>
    <property type="project" value="UniProtKB"/>
</dbReference>
<dbReference type="GO" id="GO:0007442">
    <property type="term" value="P:hindgut morphogenesis"/>
    <property type="evidence" value="ECO:0000315"/>
    <property type="project" value="FlyBase"/>
</dbReference>
<dbReference type="GO" id="GO:0007156">
    <property type="term" value="P:homophilic cell adhesion via plasma membrane adhesion molecules"/>
    <property type="evidence" value="ECO:0000250"/>
    <property type="project" value="FlyBase"/>
</dbReference>
<dbReference type="GO" id="GO:0048477">
    <property type="term" value="P:oogenesis"/>
    <property type="evidence" value="ECO:0000315"/>
    <property type="project" value="FlyBase"/>
</dbReference>
<dbReference type="GO" id="GO:0007424">
    <property type="term" value="P:open tracheal system development"/>
    <property type="evidence" value="ECO:0000315"/>
    <property type="project" value="FlyBase"/>
</dbReference>
<dbReference type="GO" id="GO:0051491">
    <property type="term" value="P:positive regulation of filopodium assembly"/>
    <property type="evidence" value="ECO:0000315"/>
    <property type="project" value="FlyBase"/>
</dbReference>
<dbReference type="GO" id="GO:0045089">
    <property type="term" value="P:positive regulation of innate immune response"/>
    <property type="evidence" value="ECO:0007001"/>
    <property type="project" value="FlyBase"/>
</dbReference>
<dbReference type="GO" id="GO:1902463">
    <property type="term" value="P:protein localization to cell leading edge"/>
    <property type="evidence" value="ECO:0000315"/>
    <property type="project" value="FlyBase"/>
</dbReference>
<dbReference type="GO" id="GO:0007431">
    <property type="term" value="P:salivary gland development"/>
    <property type="evidence" value="ECO:0000315"/>
    <property type="project" value="FlyBase"/>
</dbReference>
<dbReference type="CDD" id="cd11304">
    <property type="entry name" value="Cadherin_repeat"/>
    <property type="match status" value="33"/>
</dbReference>
<dbReference type="CDD" id="cd00054">
    <property type="entry name" value="EGF_CA"/>
    <property type="match status" value="5"/>
</dbReference>
<dbReference type="CDD" id="cd00110">
    <property type="entry name" value="LamG"/>
    <property type="match status" value="1"/>
</dbReference>
<dbReference type="FunFam" id="2.60.40.60:FF:000013">
    <property type="entry name" value="Cadherin EGF LAG seven-pass G-type receptor"/>
    <property type="match status" value="2"/>
</dbReference>
<dbReference type="FunFam" id="2.60.40.60:FF:000130">
    <property type="entry name" value="cadherin-23 isoform X1"/>
    <property type="match status" value="1"/>
</dbReference>
<dbReference type="FunFam" id="2.60.40.60:FF:000236">
    <property type="entry name" value="Dachsous, isoform B"/>
    <property type="match status" value="1"/>
</dbReference>
<dbReference type="FunFam" id="2.10.25.10:FF:000508">
    <property type="entry name" value="Eyes shut homolog"/>
    <property type="match status" value="1"/>
</dbReference>
<dbReference type="FunFam" id="2.60.40.60:FF:000015">
    <property type="entry name" value="FAT atypical cadherin 1"/>
    <property type="match status" value="1"/>
</dbReference>
<dbReference type="FunFam" id="2.60.40.60:FF:000021">
    <property type="entry name" value="FAT atypical cadherin 1"/>
    <property type="match status" value="2"/>
</dbReference>
<dbReference type="FunFam" id="2.60.40.60:FF:000026">
    <property type="entry name" value="FAT atypical cadherin 1"/>
    <property type="match status" value="2"/>
</dbReference>
<dbReference type="FunFam" id="2.60.40.60:FF:000032">
    <property type="entry name" value="FAT atypical cadherin 1"/>
    <property type="match status" value="1"/>
</dbReference>
<dbReference type="FunFam" id="2.60.40.60:FF:000033">
    <property type="entry name" value="FAT atypical cadherin 1"/>
    <property type="match status" value="1"/>
</dbReference>
<dbReference type="FunFam" id="2.60.40.60:FF:000037">
    <property type="entry name" value="FAT atypical cadherin 1"/>
    <property type="match status" value="2"/>
</dbReference>
<dbReference type="FunFam" id="2.60.40.60:FF:000051">
    <property type="entry name" value="FAT atypical cadherin 1"/>
    <property type="match status" value="1"/>
</dbReference>
<dbReference type="FunFam" id="2.60.40.60:FF:000066">
    <property type="entry name" value="FAT atypical cadherin 1"/>
    <property type="match status" value="1"/>
</dbReference>
<dbReference type="FunFam" id="2.60.40.60:FF:000075">
    <property type="entry name" value="FAT atypical cadherin 1"/>
    <property type="match status" value="1"/>
</dbReference>
<dbReference type="FunFam" id="2.60.40.60:FF:000080">
    <property type="entry name" value="FAT atypical cadherin 1"/>
    <property type="match status" value="1"/>
</dbReference>
<dbReference type="FunFam" id="2.60.40.60:FF:000039">
    <property type="entry name" value="FAT atypical cadherin 3"/>
    <property type="match status" value="1"/>
</dbReference>
<dbReference type="FunFam" id="2.60.40.60:FF:000053">
    <property type="entry name" value="FAT atypical cadherin 3"/>
    <property type="match status" value="1"/>
</dbReference>
<dbReference type="FunFam" id="2.60.40.60:FF:000058">
    <property type="entry name" value="FAT atypical cadherin 3"/>
    <property type="match status" value="1"/>
</dbReference>
<dbReference type="FunFam" id="2.60.40.60:FF:000059">
    <property type="entry name" value="FAT atypical cadherin 3"/>
    <property type="match status" value="1"/>
</dbReference>
<dbReference type="FunFam" id="2.60.40.60:FF:000090">
    <property type="entry name" value="FAT atypical cadherin 3"/>
    <property type="match status" value="1"/>
</dbReference>
<dbReference type="FunFam" id="2.10.25.10:FF:000682">
    <property type="entry name" value="Fat-like cadherin-related tumor suppressor homolog"/>
    <property type="match status" value="1"/>
</dbReference>
<dbReference type="FunFam" id="2.10.25.10:FF:000737">
    <property type="entry name" value="Fat-like cadherin-related tumor suppressor homolog"/>
    <property type="match status" value="1"/>
</dbReference>
<dbReference type="FunFam" id="2.10.25.10:FF:000771">
    <property type="entry name" value="Fat-like cadherin-related tumor suppressor homolog"/>
    <property type="match status" value="1"/>
</dbReference>
<dbReference type="FunFam" id="2.10.25.10:FF:000790">
    <property type="entry name" value="Fat-like cadherin-related tumor suppressor homolog"/>
    <property type="match status" value="1"/>
</dbReference>
<dbReference type="FunFam" id="2.60.120.200:FF:000250">
    <property type="entry name" value="Fat-like cadherin-related tumor suppressor homolog"/>
    <property type="match status" value="1"/>
</dbReference>
<dbReference type="FunFam" id="2.60.40.60:FF:000314">
    <property type="entry name" value="Fat-like cadherin-related tumor suppressor homolog"/>
    <property type="match status" value="1"/>
</dbReference>
<dbReference type="FunFam" id="2.60.40.60:FF:000325">
    <property type="entry name" value="Fat-like cadherin-related tumor suppressor homolog"/>
    <property type="match status" value="1"/>
</dbReference>
<dbReference type="FunFam" id="2.60.40.60:FF:000331">
    <property type="entry name" value="Fat-like cadherin-related tumor suppressor homolog"/>
    <property type="match status" value="1"/>
</dbReference>
<dbReference type="FunFam" id="2.60.40.60:FF:000332">
    <property type="entry name" value="Fat-like cadherin-related tumor suppressor homolog"/>
    <property type="match status" value="1"/>
</dbReference>
<dbReference type="FunFam" id="2.60.40.60:FF:000342">
    <property type="entry name" value="Fat-like cadherin-related tumor suppressor homolog"/>
    <property type="match status" value="1"/>
</dbReference>
<dbReference type="FunFam" id="2.60.40.60:FF:000343">
    <property type="entry name" value="Fat-like cadherin-related tumor suppressor homolog"/>
    <property type="match status" value="1"/>
</dbReference>
<dbReference type="FunFam" id="2.60.40.60:FF:000364">
    <property type="entry name" value="Fat-like cadherin-related tumor suppressor homolog"/>
    <property type="match status" value="1"/>
</dbReference>
<dbReference type="FunFam" id="2.60.40.60:FF:000311">
    <property type="entry name" value="Kugelei, isoform E"/>
    <property type="match status" value="1"/>
</dbReference>
<dbReference type="FunFam" id="2.60.40.60:FF:000100">
    <property type="entry name" value="protocadherin Fat 2"/>
    <property type="match status" value="2"/>
</dbReference>
<dbReference type="Gene3D" id="2.60.120.200">
    <property type="match status" value="1"/>
</dbReference>
<dbReference type="Gene3D" id="2.60.40.60">
    <property type="entry name" value="Cadherins"/>
    <property type="match status" value="33"/>
</dbReference>
<dbReference type="Gene3D" id="2.10.25.10">
    <property type="entry name" value="Laminin"/>
    <property type="match status" value="5"/>
</dbReference>
<dbReference type="InterPro" id="IPR002126">
    <property type="entry name" value="Cadherin-like_dom"/>
</dbReference>
<dbReference type="InterPro" id="IPR015919">
    <property type="entry name" value="Cadherin-like_sf"/>
</dbReference>
<dbReference type="InterPro" id="IPR020894">
    <property type="entry name" value="Cadherin_CS"/>
</dbReference>
<dbReference type="InterPro" id="IPR013320">
    <property type="entry name" value="ConA-like_dom_sf"/>
</dbReference>
<dbReference type="InterPro" id="IPR001881">
    <property type="entry name" value="EGF-like_Ca-bd_dom"/>
</dbReference>
<dbReference type="InterPro" id="IPR000742">
    <property type="entry name" value="EGF-like_dom"/>
</dbReference>
<dbReference type="InterPro" id="IPR000152">
    <property type="entry name" value="EGF-type_Asp/Asn_hydroxyl_site"/>
</dbReference>
<dbReference type="InterPro" id="IPR018097">
    <property type="entry name" value="EGF_Ca-bd_CS"/>
</dbReference>
<dbReference type="InterPro" id="IPR001791">
    <property type="entry name" value="Laminin_G"/>
</dbReference>
<dbReference type="InterPro" id="IPR050174">
    <property type="entry name" value="Protocadherin/Cadherin-CA"/>
</dbReference>
<dbReference type="PANTHER" id="PTHR24028">
    <property type="entry name" value="CADHERIN-87A"/>
    <property type="match status" value="1"/>
</dbReference>
<dbReference type="PANTHER" id="PTHR24028:SF263">
    <property type="entry name" value="CADHERIN-RELATED FAMILY MEMBER 1"/>
    <property type="match status" value="1"/>
</dbReference>
<dbReference type="Pfam" id="PF00028">
    <property type="entry name" value="Cadherin"/>
    <property type="match status" value="26"/>
</dbReference>
<dbReference type="Pfam" id="PF02210">
    <property type="entry name" value="Laminin_G_2"/>
    <property type="match status" value="1"/>
</dbReference>
<dbReference type="PRINTS" id="PR00205">
    <property type="entry name" value="CADHERIN"/>
</dbReference>
<dbReference type="SMART" id="SM00112">
    <property type="entry name" value="CA"/>
    <property type="match status" value="34"/>
</dbReference>
<dbReference type="SMART" id="SM00181">
    <property type="entry name" value="EGF"/>
    <property type="match status" value="6"/>
</dbReference>
<dbReference type="SMART" id="SM00179">
    <property type="entry name" value="EGF_CA"/>
    <property type="match status" value="4"/>
</dbReference>
<dbReference type="SMART" id="SM00282">
    <property type="entry name" value="LamG"/>
    <property type="match status" value="1"/>
</dbReference>
<dbReference type="SUPFAM" id="SSF49313">
    <property type="entry name" value="Cadherin-like"/>
    <property type="match status" value="34"/>
</dbReference>
<dbReference type="SUPFAM" id="SSF49899">
    <property type="entry name" value="Concanavalin A-like lectins/glucanases"/>
    <property type="match status" value="1"/>
</dbReference>
<dbReference type="SUPFAM" id="SSF57196">
    <property type="entry name" value="EGF/Laminin"/>
    <property type="match status" value="5"/>
</dbReference>
<dbReference type="PROSITE" id="PS00010">
    <property type="entry name" value="ASX_HYDROXYL"/>
    <property type="match status" value="1"/>
</dbReference>
<dbReference type="PROSITE" id="PS00232">
    <property type="entry name" value="CADHERIN_1"/>
    <property type="match status" value="18"/>
</dbReference>
<dbReference type="PROSITE" id="PS50268">
    <property type="entry name" value="CADHERIN_2"/>
    <property type="match status" value="34"/>
</dbReference>
<dbReference type="PROSITE" id="PS00022">
    <property type="entry name" value="EGF_1"/>
    <property type="match status" value="5"/>
</dbReference>
<dbReference type="PROSITE" id="PS01186">
    <property type="entry name" value="EGF_2"/>
    <property type="match status" value="2"/>
</dbReference>
<dbReference type="PROSITE" id="PS50026">
    <property type="entry name" value="EGF_3"/>
    <property type="match status" value="5"/>
</dbReference>
<dbReference type="PROSITE" id="PS01187">
    <property type="entry name" value="EGF_CA"/>
    <property type="match status" value="1"/>
</dbReference>
<dbReference type="PROSITE" id="PS50025">
    <property type="entry name" value="LAM_G_DOMAIN"/>
    <property type="match status" value="1"/>
</dbReference>
<protein>
    <recommendedName>
        <fullName>Fat-like cadherin-related tumor suppressor homolog</fullName>
    </recommendedName>
    <alternativeName>
        <fullName>Protein kugelei</fullName>
    </alternativeName>
</protein>
<reference evidence="9" key="1">
    <citation type="journal article" date="2000" name="Science">
        <title>The genome sequence of Drosophila melanogaster.</title>
        <authorList>
            <person name="Adams M.D."/>
            <person name="Celniker S.E."/>
            <person name="Holt R.A."/>
            <person name="Evans C.A."/>
            <person name="Gocayne J.D."/>
            <person name="Amanatides P.G."/>
            <person name="Scherer S.E."/>
            <person name="Li P.W."/>
            <person name="Hoskins R.A."/>
            <person name="Galle R.F."/>
            <person name="George R.A."/>
            <person name="Lewis S.E."/>
            <person name="Richards S."/>
            <person name="Ashburner M."/>
            <person name="Henderson S.N."/>
            <person name="Sutton G.G."/>
            <person name="Wortman J.R."/>
            <person name="Yandell M.D."/>
            <person name="Zhang Q."/>
            <person name="Chen L.X."/>
            <person name="Brandon R.C."/>
            <person name="Rogers Y.-H.C."/>
            <person name="Blazej R.G."/>
            <person name="Champe M."/>
            <person name="Pfeiffer B.D."/>
            <person name="Wan K.H."/>
            <person name="Doyle C."/>
            <person name="Baxter E.G."/>
            <person name="Helt G."/>
            <person name="Nelson C.R."/>
            <person name="Miklos G.L.G."/>
            <person name="Abril J.F."/>
            <person name="Agbayani A."/>
            <person name="An H.-J."/>
            <person name="Andrews-Pfannkoch C."/>
            <person name="Baldwin D."/>
            <person name="Ballew R.M."/>
            <person name="Basu A."/>
            <person name="Baxendale J."/>
            <person name="Bayraktaroglu L."/>
            <person name="Beasley E.M."/>
            <person name="Beeson K.Y."/>
            <person name="Benos P.V."/>
            <person name="Berman B.P."/>
            <person name="Bhandari D."/>
            <person name="Bolshakov S."/>
            <person name="Borkova D."/>
            <person name="Botchan M.R."/>
            <person name="Bouck J."/>
            <person name="Brokstein P."/>
            <person name="Brottier P."/>
            <person name="Burtis K.C."/>
            <person name="Busam D.A."/>
            <person name="Butler H."/>
            <person name="Cadieu E."/>
            <person name="Center A."/>
            <person name="Chandra I."/>
            <person name="Cherry J.M."/>
            <person name="Cawley S."/>
            <person name="Dahlke C."/>
            <person name="Davenport L.B."/>
            <person name="Davies P."/>
            <person name="de Pablos B."/>
            <person name="Delcher A."/>
            <person name="Deng Z."/>
            <person name="Mays A.D."/>
            <person name="Dew I."/>
            <person name="Dietz S.M."/>
            <person name="Dodson K."/>
            <person name="Doup L.E."/>
            <person name="Downes M."/>
            <person name="Dugan-Rocha S."/>
            <person name="Dunkov B.C."/>
            <person name="Dunn P."/>
            <person name="Durbin K.J."/>
            <person name="Evangelista C.C."/>
            <person name="Ferraz C."/>
            <person name="Ferriera S."/>
            <person name="Fleischmann W."/>
            <person name="Fosler C."/>
            <person name="Gabrielian A.E."/>
            <person name="Garg N.S."/>
            <person name="Gelbart W.M."/>
            <person name="Glasser K."/>
            <person name="Glodek A."/>
            <person name="Gong F."/>
            <person name="Gorrell J.H."/>
            <person name="Gu Z."/>
            <person name="Guan P."/>
            <person name="Harris M."/>
            <person name="Harris N.L."/>
            <person name="Harvey D.A."/>
            <person name="Heiman T.J."/>
            <person name="Hernandez J.R."/>
            <person name="Houck J."/>
            <person name="Hostin D."/>
            <person name="Houston K.A."/>
            <person name="Howland T.J."/>
            <person name="Wei M.-H."/>
            <person name="Ibegwam C."/>
            <person name="Jalali M."/>
            <person name="Kalush F."/>
            <person name="Karpen G.H."/>
            <person name="Ke Z."/>
            <person name="Kennison J.A."/>
            <person name="Ketchum K.A."/>
            <person name="Kimmel B.E."/>
            <person name="Kodira C.D."/>
            <person name="Kraft C.L."/>
            <person name="Kravitz S."/>
            <person name="Kulp D."/>
            <person name="Lai Z."/>
            <person name="Lasko P."/>
            <person name="Lei Y."/>
            <person name="Levitsky A.A."/>
            <person name="Li J.H."/>
            <person name="Li Z."/>
            <person name="Liang Y."/>
            <person name="Lin X."/>
            <person name="Liu X."/>
            <person name="Mattei B."/>
            <person name="McIntosh T.C."/>
            <person name="McLeod M.P."/>
            <person name="McPherson D."/>
            <person name="Merkulov G."/>
            <person name="Milshina N.V."/>
            <person name="Mobarry C."/>
            <person name="Morris J."/>
            <person name="Moshrefi A."/>
            <person name="Mount S.M."/>
            <person name="Moy M."/>
            <person name="Murphy B."/>
            <person name="Murphy L."/>
            <person name="Muzny D.M."/>
            <person name="Nelson D.L."/>
            <person name="Nelson D.R."/>
            <person name="Nelson K.A."/>
            <person name="Nixon K."/>
            <person name="Nusskern D.R."/>
            <person name="Pacleb J.M."/>
            <person name="Palazzolo M."/>
            <person name="Pittman G.S."/>
            <person name="Pan S."/>
            <person name="Pollard J."/>
            <person name="Puri V."/>
            <person name="Reese M.G."/>
            <person name="Reinert K."/>
            <person name="Remington K."/>
            <person name="Saunders R.D.C."/>
            <person name="Scheeler F."/>
            <person name="Shen H."/>
            <person name="Shue B.C."/>
            <person name="Siden-Kiamos I."/>
            <person name="Simpson M."/>
            <person name="Skupski M.P."/>
            <person name="Smith T.J."/>
            <person name="Spier E."/>
            <person name="Spradling A.C."/>
            <person name="Stapleton M."/>
            <person name="Strong R."/>
            <person name="Sun E."/>
            <person name="Svirskas R."/>
            <person name="Tector C."/>
            <person name="Turner R."/>
            <person name="Venter E."/>
            <person name="Wang A.H."/>
            <person name="Wang X."/>
            <person name="Wang Z.-Y."/>
            <person name="Wassarman D.A."/>
            <person name="Weinstock G.M."/>
            <person name="Weissenbach J."/>
            <person name="Williams S.M."/>
            <person name="Woodage T."/>
            <person name="Worley K.C."/>
            <person name="Wu D."/>
            <person name="Yang S."/>
            <person name="Yao Q.A."/>
            <person name="Ye J."/>
            <person name="Yeh R.-F."/>
            <person name="Zaveri J.S."/>
            <person name="Zhan M."/>
            <person name="Zhang G."/>
            <person name="Zhao Q."/>
            <person name="Zheng L."/>
            <person name="Zheng X.H."/>
            <person name="Zhong F.N."/>
            <person name="Zhong W."/>
            <person name="Zhou X."/>
            <person name="Zhu S.C."/>
            <person name="Zhu X."/>
            <person name="Smith H.O."/>
            <person name="Gibbs R.A."/>
            <person name="Myers E.W."/>
            <person name="Rubin G.M."/>
            <person name="Venter J.C."/>
        </authorList>
    </citation>
    <scope>NUCLEOTIDE SEQUENCE [LARGE SCALE GENOMIC DNA]</scope>
    <source>
        <strain>Berkeley</strain>
    </source>
</reference>
<reference key="2">
    <citation type="journal article" date="2002" name="Genome Biol.">
        <title>Annotation of the Drosophila melanogaster euchromatic genome: a systematic review.</title>
        <authorList>
            <person name="Misra S."/>
            <person name="Crosby M.A."/>
            <person name="Mungall C.J."/>
            <person name="Matthews B.B."/>
            <person name="Campbell K.S."/>
            <person name="Hradecky P."/>
            <person name="Huang Y."/>
            <person name="Kaminker J.S."/>
            <person name="Millburn G.H."/>
            <person name="Prochnik S.E."/>
            <person name="Smith C.D."/>
            <person name="Tupy J.L."/>
            <person name="Whitfield E.J."/>
            <person name="Bayraktaroglu L."/>
            <person name="Berman B.P."/>
            <person name="Bettencourt B.R."/>
            <person name="Celniker S.E."/>
            <person name="de Grey A.D.N.J."/>
            <person name="Drysdale R.A."/>
            <person name="Harris N.L."/>
            <person name="Richter J."/>
            <person name="Russo S."/>
            <person name="Schroeder A.J."/>
            <person name="Shu S.Q."/>
            <person name="Stapleton M."/>
            <person name="Yamada C."/>
            <person name="Ashburner M."/>
            <person name="Gelbart W.M."/>
            <person name="Rubin G.M."/>
            <person name="Lewis S.E."/>
        </authorList>
    </citation>
    <scope>GENOME REANNOTATION</scope>
    <scope>ALTERNATIVE SPLICING</scope>
    <source>
        <strain>Berkeley</strain>
    </source>
</reference>
<reference key="3">
    <citation type="journal article" date="2002" name="Genome Biol.">
        <title>A Drosophila full-length cDNA resource.</title>
        <authorList>
            <person name="Stapleton M."/>
            <person name="Carlson J.W."/>
            <person name="Brokstein P."/>
            <person name="Yu C."/>
            <person name="Champe M."/>
            <person name="George R.A."/>
            <person name="Guarin H."/>
            <person name="Kronmiller B."/>
            <person name="Pacleb J.M."/>
            <person name="Park S."/>
            <person name="Wan K.H."/>
            <person name="Rubin G.M."/>
            <person name="Celniker S.E."/>
        </authorList>
    </citation>
    <scope>NUCLEOTIDE SEQUENCE [LARGE SCALE MRNA] OF 3360-4401 (ISOFORMS C/D)</scope>
    <scope>NUCLEOTIDE SEQUENCE [LARGE SCALE MRNA] OF 3821-4699 (ISOFORM C)</scope>
    <source>
        <strain>Berkeley</strain>
        <tissue>Embryo</tissue>
        <tissue>Ovary</tissue>
    </source>
</reference>
<reference key="4">
    <citation type="journal article" date="2009" name="Development">
        <title>The cadherin Fat2 is required for planar cell polarity in the Drosophila ovary.</title>
        <authorList>
            <person name="Viktorinova I."/>
            <person name="Konig T."/>
            <person name="Schlichting K."/>
            <person name="Dahmann C."/>
        </authorList>
    </citation>
    <scope>FUNCTION</scope>
    <scope>TISSUE SPECIFICITY</scope>
    <scope>DISRUPTION PHENOTYPE</scope>
</reference>
<reference key="5">
    <citation type="journal article" date="2013" name="Dev. Cell">
        <title>A Rab10-dependent mechanism for polarized basement membrane secretion during organ morphogenesis.</title>
        <authorList>
            <person name="Lerner D.W."/>
            <person name="McCoy D."/>
            <person name="Isabella A.J."/>
            <person name="Mahowald A.P."/>
            <person name="Gerlach G.F."/>
            <person name="Chaudhry T.A."/>
            <person name="Horne-Badovinac S."/>
        </authorList>
    </citation>
    <scope>FUNCTION</scope>
    <scope>DISRUPTION PHENOTYPE</scope>
</reference>
<keyword id="KW-0025">Alternative splicing</keyword>
<keyword id="KW-0106">Calcium</keyword>
<keyword id="KW-0130">Cell adhesion</keyword>
<keyword id="KW-1003">Cell membrane</keyword>
<keyword id="KW-1015">Disulfide bond</keyword>
<keyword id="KW-0245">EGF-like domain</keyword>
<keyword id="KW-0325">Glycoprotein</keyword>
<keyword id="KW-0472">Membrane</keyword>
<keyword id="KW-1185">Reference proteome</keyword>
<keyword id="KW-0677">Repeat</keyword>
<keyword id="KW-0732">Signal</keyword>
<keyword id="KW-0812">Transmembrane</keyword>
<keyword id="KW-1133">Transmembrane helix</keyword>
<accession>Q9VW71</accession>
<accession>A4V252</accession>
<accession>Q95S51</accession>
<sequence>MFTMKIKKYVTPVKRKAFTILQWISLLCSLWLIPTVQSKADEKHTATLEYRLENQLQDLYRFSHSVYNVTIPENSLGKTYAKGVLHERLAGLRVGLNAEVKYRIISGDKEKLFKAEEKLVGDFAFLAIRTRTNNVVLNREKTEEYVIRVKAHVHLHDRNVSSYETEANIHIKVLDRNDLSPLFYPTQYTVVIPEDTPKYQSILKVTADDADLGINGEIYYSLLMDSEYFAIHPTTGEITLLQQLQYAENSHFELTVVAYDRGSWVNHQNHQASKTKVSISVKQVNFYAPEIFTKTFSSVTPTSNPLIYGIVRVNDKDTGINGNIGRLEIVDGNPDGTFLLKAAETKDEYYIELNQFAHLNQQHFIYNLTLLAEDLGTPRRFAYKSVPIQIKPESKNIPIFTQEIYEVSIPETAPINMPVIRLKVSDPDLGKNALVYLEIVGGNEGDEFRINPDSGMLYTAKQLDAEKKSSYTLTVSAIDQANVGSRKQSSAKVKISVQDMNDNDPIFENVNKVISINENNLAGSFVVKLTAKDRDSGENSYISYSIANLNAVPFEIDHFSGIVKTTSLLDFETMKRNYELIIRASDWGLPYRRQTEIKLSIVVKDINDNRPQFERVNCYGKVTKSAPMGTEVFVTSAIDFDAGDIISYRLSDGNEDGCFNLDPTSGSLSISCDLKKTTLTNRILKVSATDGTHFSDDLIINVHLMPEDLGGDSSILHGFGSFECRETGVARRLAETLSLAEKNNVKSASPSVFSDLSLTPSRYGQNVHRPEFVNFPQELSINESVQLGETVAWIEAKDRDLGYNGKLVFAISDGDYDSVFRIDPDRGELQIIGYLDRERQNEYVLNITVYDLGNPTKSTSKMLPITILDVNDNRPVIQKTLATFRLTESARIGTVVHCLHATDADSGINAQVTYALSVECSDFTVNATTGCLRLNKPLDREKQDNYALHITAKDGGSPVLSSEALVYVLVDDVNDNAPVFGVQEYIFKVREDLPRGTVLAVIEAVDEDIGPNAEIQFSLKEETQDEELFRIDKHTGAIRTQGYLDYENKQVHNLIVSAIDGGDPSLTSDMSIVIMIIDVNENRFAPEFDDFVYEGKVKENKPKGTFVMNVTARDMDTVDLNSKITYSITGGDGLGIFAVNDQGSITSLSQLDAETKNFYWLTLCAQDCAIVPLSNCVEVYIQVENENDNIPLTDKPVYYVNVTEASVENVEIITLKAFDPDIDPTQTITYNIVSGNLVGYFEIDSKTGVIKTTERKLDRENQAEHILEVAISDNGSPVLSSTSRIVVSVLDINDNSPEFDQRVYKVQVPSSATVNQSIFQVHAIDSDSGENGRITYSIKSGKGKNKFRIDSQRGHIHIAKPLDSDNEFEIHIKAEDNGIPKKSQTARVNIVVVPVNPNSQNAPLIVRKTSENVVDLTENDKPGFLVTQILAVDDDNDQLWYNISNGNDDNTFYIGQDNGNILLSKYLDYETQQSYNLTISVTDGTFTAFTNLLVQVIDINDNPPQFAKDVYHVNISENIEEESVIMQLHATDRDEDKKLFYHLHATQDPSSLALFRIDSISGNVIVTQRLDFEKTAQHILIVFVKDQGAPGKRNYAKIIVNVHDHNDHHPEFTAKIIQSKVPESAAIGSKLAEVRAIDRDSGHNAEIQYSIITGNVGSVFEIDPTFGIITLAGNLNINKIQEYMLQVKAVDLGNPPLSSQIPVHIIVTMSENDPPKFPTNNIAIEIFENLPIGTFVTQVTARSSSSIFFNIISGNINESFRINPSTGVIVINGNIDYESIKVFNLTVKGTNMAAESSCQNIIIHILDANDNIPYFVQNEYVGALPESAAIGSYVLKVHDSSKDHLTLQVKDADVGVNGMVEYHIVDDLAKNFFKIDSTTGAIELLRQLDYETNAGYTFDVTVSDMGKPKLHSTTTAHVTIRVINVNDCPPVFNERELNVTLFLPTFENVFVRQVSAKDADNDTLRFDIVDGNTNECFQIEKYTGIITTRNFEILNNENDRDYALHVRASDGIFSAILIVKIKVLSAIDSNFAFQRESYRFSAFENNTKVATIGLVNVIGNTLDENVEYRILNPTQLFDIGISSGALKTTGVIFDREVKDLYRLFVEAKSMLYDGMNSNVRRAVTSIDISVLDVNDNCPLFVNMPYYATVSIDDPKGTIIMQVKAIDLDSAENGEVRYELKKGNGELFKLDRKSGELSIKQHVEGHNRNYELTVAAYDGAITPCSSEAPLQVKVIDRSMPVFEKQFYTVSVKEDVEMYSALSVSIEAESPLGRSLIYTISSESQSFEIDYNTGSIFVVNELDYEKISSHDVSIRATDSLSGVYAEVVLSVSIMDVNDCYPEIESDIYNLTIPENASFGTQILKINATDNDSGANAKLSYYIESINGQNNSELFYIDVTDGNLYLKTPLDYEQIKYHHIVVNVKDHGSPSLSSRSNVFITVKDLNDNAPCFVEPSYFTKVSVAAVRGQFVALPKAYDKDISDTDSLEYKIVYGNELQTYSIDKLTGVISLQNMLNFTDKSSTVLNISVSDGVHTAYARLKISLLPENVYSPLFDQSTYEAQVPENLLHGHNIITVKASDGDFGTYANLYYEIVSEEMKKIFLIDQTTGVITSKVTFDREKKDEYVVLLKVSDGGGKFGFASLKVIVVDVNDNVPYFLLKEYKMVVSTTVEANQTILTVKAKDDDIVDNGSVHFQIVQKSNDKAVKDVIEINEKTGDIVFKSKAESYGVNSYQFFVRASDRGEPQFHSEVPVSIEIIETDANIPTFEKSSVLLKIIESTPPGTVLTKLHMIGNYTFKFSIAADQDHFMISDSGELILQQTLDREQQESHNLIVVAETSTVPVFFAYADVLIDVRDENDNYPKFDNTFYSASVAENSEKVISLVKVSATDADTGPNGDIRYYLESDTENIQNIFDIDIYSGWITLLTSLDREVQSEYNFKVIAADNGHPKHDAKVPVTIKIVDYNDNAPVFKLPIEGLSVFENALPGTVLINLLLIDPDIEKQEMDFFIVSGDKQAQFQIGKSGELFIAKPLDREQLMFYNLSIIATDGKFTAKANVEIDVKDINDNTPYCLKPRYHISTNESISIGTTLVEVKAIDFDFQSKLRFYLSGKGADDFSIGKESGILKVASALDRETTPKYKLVAHVQDGKDFTQECFSEIIITVNDINDNMPIFSMAQYRVSVPEDAQLNTLITKVHAMDKDFGVNRQIKYSLMGENHDYFKISKSTGIIRLHKSLDRETISLFNLTVKAEDCGVPKLHSIATVAVNILDINDNPPEFSMRQYSCKILENATHGTEVCKVYATSIDIGVNADIHYFIMSGNEQGKFKMDSTTGDLVLNATLDYEMSKFYFLTIQAIDGGTPPLSNNAYVNISILDINDNSPTFLQNLYRINVNEDIFVGSKILDVKATDEDSDVNGLVTYNIERGDNIGQFSIDPKNGTISVSRPLDRETISHYTLEIQACDQGDPQRCNSVPININILDTNDNAPIFSSSNYSVVLQENRLLGYVFLTFKISDADETPNTTPYTFDIRSGNEGGLFRLEQDGSLRTASRFNHNLQDEFVIQVRVFDNGTPPLYSDAWVVVKIIEESQYPPIVTPLEVTINSFEDDFSGAFIGKVHASDQDKYDELNFSLVSGPDDMYQSSKLFNISNNTGKIYAISNLDIGLYKLNVSVSDGKFHVFSIVKINVELVTNDMLKESVVIRFRRISASEFLLSHRKTFMRSIRNIMRCRQKDVILITLQSDYQKASQHAVGNRRARSIDSDLNVVFAVRKQQIIPDSDEFFTSDEIRQTLIDKKNEIENETNLVVEDVLPSTCQSNKNDCVHGECKQILQILKNNVTTTFTDVISFAAPSYIPVNTCVCRPGFDGKHCKETVNACSTDPCSPQRICMPSGSALGYQCVCPKGFSGTYCERKSSKCSNESCDMGLFTAVSFGGKSYAHYKINKVKAKFTLENGFSYSLQIRTVQQTGTLLYASGKVDYNILEIINGAVQYRFDLGSGEGVISVSSINISDGEWHQISLERSLNSAKVMVDNKHVSHGSAPGVNGILNIQSNDIFVGAEVRPHPSIIGYEDIQRGFIGCMANIKIAKESLPLYISGGSTIAALKRFTNVEFKCDPSNVLVRLGICGSQPCANSGICKELDTDVFECACQPRYSGKHCEIDLDPCSSGPCLFGGRCDYHGPNNYSCTCPIHLSGKRCEYGKFCTPNPCKNGGICEEGDGISHCMCRGYTGPTCEIDVDECENQPCGNGATCINEPGSFRCICPSYLTGASCGDPLYSNSISTKLKNFSIEHISGIISGVAVVLVIISCVLCCVVLKRSSSSKRRNRLEKDKNKSSYKEANLNSLVDKDNYCKPNVKLSNLEVNQRPISYTAVPNDNLVLSNRNFVNNLDILRSYGSAGDELENVPFEYQKVNRNKQHVNINSCHSTDADNAYKQEWCEQMHLRTFSENKLNNELKRDFGPSVSRFSTGKLIQVEMPNVCHSSSANFVDYSALANGQYHWDCSDWVRKSHNPLPDITEVPGAEIADSSSLHSNDSNESKSKKAFFVHREDGDVDPTRDIAALNEDIGSEYLDSEAESCLEPFMLPRSSNQPLSRLSSFNNIENEDYKSNTVPLPSKVSHSCKVYLRHPDSYLPTMHFPSETDGESSMTEGPISRMEIKTRRTISENSEEAYLFPCTVGEIGSNSNISVRLCEIEDSELEEFLPQQQTNN</sequence>
<name>FAT2_DROME</name>
<feature type="signal peptide" evidence="2">
    <location>
        <begin position="1"/>
        <end position="38"/>
    </location>
</feature>
<feature type="chain" id="PRO_0000004016" description="Fat-like cadherin-related tumor suppressor homolog">
    <location>
        <begin position="39"/>
        <end position="4699"/>
    </location>
</feature>
<feature type="topological domain" description="Extracellular" evidence="2">
    <location>
        <begin position="39"/>
        <end position="4285"/>
    </location>
</feature>
<feature type="transmembrane region" description="Helical" evidence="2">
    <location>
        <begin position="4286"/>
        <end position="4306"/>
    </location>
</feature>
<feature type="topological domain" description="Cytoplasmic" evidence="2">
    <location>
        <begin position="4307"/>
        <end position="4699"/>
    </location>
</feature>
<feature type="domain" description="Cadherin 1" evidence="3">
    <location>
        <begin position="63"/>
        <end position="183"/>
    </location>
</feature>
<feature type="domain" description="Cadherin 2" evidence="3">
    <location>
        <begin position="184"/>
        <end position="291"/>
    </location>
</feature>
<feature type="domain" description="Cadherin 3" evidence="3">
    <location>
        <begin position="288"/>
        <end position="400"/>
    </location>
</feature>
<feature type="domain" description="Cadherin 4" evidence="3">
    <location>
        <begin position="401"/>
        <end position="507"/>
    </location>
</feature>
<feature type="domain" description="Cadherin 5" evidence="3">
    <location>
        <begin position="508"/>
        <end position="613"/>
    </location>
</feature>
<feature type="domain" description="Cadherin 6" evidence="3">
    <location>
        <begin position="614"/>
        <end position="716"/>
    </location>
</feature>
<feature type="domain" description="Cadherin 7" evidence="3">
    <location>
        <begin position="773"/>
        <end position="877"/>
    </location>
</feature>
<feature type="domain" description="Cadherin 8" evidence="3">
    <location>
        <begin position="878"/>
        <end position="980"/>
    </location>
</feature>
<feature type="domain" description="Cadherin 9" evidence="3">
    <location>
        <begin position="981"/>
        <end position="1088"/>
    </location>
</feature>
<feature type="domain" description="Cadherin 10" evidence="3">
    <location>
        <begin position="1089"/>
        <end position="1198"/>
    </location>
</feature>
<feature type="domain" description="Cadherin 11" evidence="3">
    <location>
        <begin position="1194"/>
        <end position="1299"/>
    </location>
</feature>
<feature type="domain" description="Cadherin 12" evidence="3">
    <location>
        <begin position="1300"/>
        <end position="1405"/>
    </location>
</feature>
<feature type="domain" description="Cadherin 13" evidence="3">
    <location>
        <begin position="1408"/>
        <end position="1506"/>
    </location>
</feature>
<feature type="domain" description="Cadherin 14" evidence="3">
    <location>
        <begin position="1507"/>
        <end position="1612"/>
    </location>
</feature>
<feature type="domain" description="Cadherin 15" evidence="3">
    <location>
        <begin position="1613"/>
        <end position="1717"/>
    </location>
</feature>
<feature type="domain" description="Cadherin 16" evidence="3">
    <location>
        <begin position="1718"/>
        <end position="1815"/>
    </location>
</feature>
<feature type="domain" description="Cadherin 17" evidence="3">
    <location>
        <begin position="1816"/>
        <end position="1932"/>
    </location>
</feature>
<feature type="domain" description="Cadherin 18" evidence="3">
    <location>
        <begin position="1933"/>
        <end position="2033"/>
    </location>
</feature>
<feature type="domain" description="Cadherin 19" evidence="3">
    <location>
        <begin position="2034"/>
        <end position="2140"/>
    </location>
</feature>
<feature type="domain" description="Cadherin 20" evidence="3">
    <location>
        <begin position="2141"/>
        <end position="2241"/>
    </location>
</feature>
<feature type="domain" description="Cadherin 21" evidence="3">
    <location>
        <begin position="2242"/>
        <end position="2341"/>
    </location>
</feature>
<feature type="domain" description="Cadherin 22" evidence="3">
    <location>
        <begin position="2342"/>
        <end position="2449"/>
    </location>
</feature>
<feature type="domain" description="Cadherin 23" evidence="3">
    <location>
        <begin position="2450"/>
        <end position="2551"/>
    </location>
</feature>
<feature type="domain" description="Cadherin 24" evidence="3">
    <location>
        <begin position="2552"/>
        <end position="2654"/>
    </location>
</feature>
<feature type="domain" description="Cadherin 25" evidence="3">
    <location>
        <begin position="2655"/>
        <end position="2763"/>
    </location>
</feature>
<feature type="domain" description="Cadherin 26" evidence="3">
    <location>
        <begin position="2764"/>
        <end position="2860"/>
    </location>
</feature>
<feature type="domain" description="Cadherin 27" evidence="3">
    <location>
        <begin position="2861"/>
        <end position="2967"/>
    </location>
</feature>
<feature type="domain" description="Cadherin 28" evidence="3">
    <location>
        <begin position="2968"/>
        <end position="3072"/>
    </location>
</feature>
<feature type="domain" description="Cadherin 29" evidence="3">
    <location>
        <begin position="3068"/>
        <end position="3169"/>
    </location>
</feature>
<feature type="domain" description="Cadherin 30" evidence="3">
    <location>
        <begin position="3170"/>
        <end position="3273"/>
    </location>
</feature>
<feature type="domain" description="Cadherin 31" evidence="3">
    <location>
        <begin position="3274"/>
        <end position="3378"/>
    </location>
</feature>
<feature type="domain" description="Cadherin 32" evidence="3">
    <location>
        <begin position="3379"/>
        <end position="3483"/>
    </location>
</feature>
<feature type="domain" description="Cadherin 33" evidence="3">
    <location>
        <begin position="3484"/>
        <end position="3588"/>
    </location>
</feature>
<feature type="domain" description="Cadherin 34" evidence="3">
    <location>
        <begin position="3589"/>
        <end position="3696"/>
    </location>
</feature>
<feature type="domain" description="EGF-like 1" evidence="4">
    <location>
        <begin position="3865"/>
        <end position="3903"/>
    </location>
</feature>
<feature type="domain" description="Laminin G-like" evidence="5">
    <location>
        <begin position="3921"/>
        <end position="4105"/>
    </location>
</feature>
<feature type="domain" description="EGF-like 2" evidence="4">
    <location>
        <begin position="4113"/>
        <end position="4150"/>
    </location>
</feature>
<feature type="domain" description="EGF-like 3" evidence="4">
    <location>
        <begin position="4152"/>
        <end position="4189"/>
    </location>
</feature>
<feature type="domain" description="EGF-like 4" evidence="4">
    <location>
        <begin position="4190"/>
        <end position="4225"/>
    </location>
</feature>
<feature type="domain" description="EGF-like 5" evidence="4">
    <location>
        <begin position="4227"/>
        <end position="4263"/>
    </location>
</feature>
<feature type="glycosylation site" description="N-linked (GlcNAc...) asparagine" evidence="2">
    <location>
        <position position="68"/>
    </location>
</feature>
<feature type="glycosylation site" description="N-linked (GlcNAc...) asparagine" evidence="2">
    <location>
        <position position="159"/>
    </location>
</feature>
<feature type="glycosylation site" description="N-linked (GlcNAc...) asparagine" evidence="2">
    <location>
        <position position="367"/>
    </location>
</feature>
<feature type="glycosylation site" description="N-linked (GlcNAc...) asparagine" evidence="2">
    <location>
        <position position="782"/>
    </location>
</feature>
<feature type="glycosylation site" description="N-linked (GlcNAc...) asparagine" evidence="2">
    <location>
        <position position="846"/>
    </location>
</feature>
<feature type="glycosylation site" description="N-linked (GlcNAc...) asparagine" evidence="2">
    <location>
        <position position="926"/>
    </location>
</feature>
<feature type="glycosylation site" description="N-linked (GlcNAc...) asparagine" evidence="2">
    <location>
        <position position="1109"/>
    </location>
</feature>
<feature type="glycosylation site" description="N-linked (GlcNAc...) asparagine" evidence="2">
    <location>
        <position position="1201"/>
    </location>
</feature>
<feature type="glycosylation site" description="N-linked (GlcNAc...) asparagine" evidence="2">
    <location>
        <position position="1315"/>
    </location>
</feature>
<feature type="glycosylation site" description="N-linked (GlcNAc...) asparagine" evidence="2">
    <location>
        <position position="1442"/>
    </location>
</feature>
<feature type="glycosylation site" description="N-linked (GlcNAc...) asparagine" evidence="2">
    <location>
        <position position="1476"/>
    </location>
</feature>
<feature type="glycosylation site" description="N-linked (GlcNAc...) asparagine" evidence="2">
    <location>
        <position position="1514"/>
    </location>
</feature>
<feature type="disulfide bond" evidence="2">
    <location>
        <begin position="3807"/>
        <end position="3819"/>
    </location>
</feature>
<feature type="disulfide bond" evidence="2">
    <location>
        <begin position="3814"/>
        <end position="3851"/>
    </location>
</feature>
<feature type="disulfide bond" evidence="2">
    <location>
        <begin position="3853"/>
        <end position="3862"/>
    </location>
</feature>
<feature type="disulfide bond" evidence="2">
    <location>
        <begin position="3869"/>
        <end position="3880"/>
    </location>
</feature>
<feature type="disulfide bond" evidence="2">
    <location>
        <begin position="3874"/>
        <end position="3891"/>
    </location>
</feature>
<feature type="disulfide bond" evidence="2">
    <location>
        <begin position="3893"/>
        <end position="3902"/>
    </location>
</feature>
<feature type="disulfide bond" evidence="1">
    <location>
        <begin position="4071"/>
        <end position="4105"/>
    </location>
</feature>
<feature type="disulfide bond" evidence="2">
    <location>
        <begin position="4117"/>
        <end position="4128"/>
    </location>
</feature>
<feature type="disulfide bond" evidence="2">
    <location>
        <begin position="4122"/>
        <end position="4138"/>
    </location>
</feature>
<feature type="disulfide bond" evidence="2">
    <location>
        <begin position="4140"/>
        <end position="4149"/>
    </location>
</feature>
<feature type="disulfide bond" evidence="2">
    <location>
        <begin position="4156"/>
        <end position="4167"/>
    </location>
</feature>
<feature type="disulfide bond" evidence="2">
    <location>
        <begin position="4161"/>
        <end position="4177"/>
    </location>
</feature>
<feature type="disulfide bond" evidence="2">
    <location>
        <begin position="4179"/>
        <end position="4188"/>
    </location>
</feature>
<feature type="disulfide bond" evidence="1">
    <location>
        <begin position="4194"/>
        <end position="4205"/>
    </location>
</feature>
<feature type="disulfide bond" evidence="1">
    <location>
        <begin position="4199"/>
        <end position="4214"/>
    </location>
</feature>
<feature type="disulfide bond" evidence="1">
    <location>
        <begin position="4216"/>
        <end position="4224"/>
    </location>
</feature>
<feature type="disulfide bond" evidence="2">
    <location>
        <begin position="4231"/>
        <end position="4242"/>
    </location>
</feature>
<feature type="disulfide bond" evidence="2">
    <location>
        <begin position="4236"/>
        <end position="4251"/>
    </location>
</feature>
<feature type="disulfide bond" evidence="2">
    <location>
        <begin position="4253"/>
        <end position="4262"/>
    </location>
</feature>
<feature type="splice variant" id="VSP_054450" description="In isoform C." evidence="8">
    <original>VPLPSKVSHSC</original>
    <variation>G</variation>
    <location>
        <begin position="4601"/>
        <end position="4611"/>
    </location>
</feature>
<feature type="sequence conflict" description="In Ref. 3; AAL28503." evidence="9" ref="3">
    <original>G</original>
    <variation>E</variation>
    <location>
        <position position="3946"/>
    </location>
</feature>
<organism evidence="10">
    <name type="scientific">Drosophila melanogaster</name>
    <name type="common">Fruit fly</name>
    <dbReference type="NCBI Taxonomy" id="7227"/>
    <lineage>
        <taxon>Eukaryota</taxon>
        <taxon>Metazoa</taxon>
        <taxon>Ecdysozoa</taxon>
        <taxon>Arthropoda</taxon>
        <taxon>Hexapoda</taxon>
        <taxon>Insecta</taxon>
        <taxon>Pterygota</taxon>
        <taxon>Neoptera</taxon>
        <taxon>Endopterygota</taxon>
        <taxon>Diptera</taxon>
        <taxon>Brachycera</taxon>
        <taxon>Muscomorpha</taxon>
        <taxon>Ephydroidea</taxon>
        <taxon>Drosophilidae</taxon>
        <taxon>Drosophila</taxon>
        <taxon>Sophophora</taxon>
    </lineage>
</organism>
<gene>
    <name type="primary">kug</name>
    <name type="synonym">fat2</name>
    <name type="ORF">CG7749</name>
</gene>
<comment type="function">
    <text evidence="6 7">Required for the planar polarity of actin filament orientation at the basal side of ovarian follicle cells (PubMed:19906848, PubMed:23369713). Required for proper egg chamber shape and elongation of the egg chamber during oogenesis (PubMed:19906848, PubMed:23369713). Required for the correct planar polarization of Rab10 within the basal follicle cell epithelium and is therefore indirectly involved in the Rab10-dependent remodeling of the basal membrane during egg chamber elongation (PubMed:23369713).</text>
</comment>
<comment type="subcellular location">
    <subcellularLocation>
        <location>Cell membrane</location>
        <topology>Single-pass type I membrane protein</topology>
    </subcellularLocation>
    <text>Accumulates on cell membranes where the planar oriented actin filaments terminate.</text>
</comment>
<comment type="alternative products">
    <event type="alternative splicing"/>
    <isoform>
        <id>Q9VW71-1</id>
        <name>D</name>
        <sequence type="displayed"/>
    </isoform>
    <isoform>
        <id>Q9VW71-2</id>
        <name>C</name>
        <sequence type="described" ref="VSP_054450"/>
    </isoform>
</comment>
<comment type="tissue specificity">
    <text evidence="6">Localizes where basal actin filaments terminate.</text>
</comment>
<comment type="disruption phenotype">
    <text evidence="6 7">Defects in actin filament orientation correlate with a failure of egg chambers to elongate during oogenesis (PubMed:19906848). In follicle cells, Rab10 protein polarizes normally along the apical-basal axis, but is mislocalized within the epithelial plane (PubMed:23369713). Epithelia migration is impaired and the structure of the basal membrane is disrupted (PubMed:23369713).</text>
</comment>
<comment type="sequence caution" evidence="9">
    <conflict type="erroneous initiation">
        <sequence resource="EMBL-CDS" id="AAL28503"/>
    </conflict>
    <text>Truncated N-terminus.</text>
</comment>
<comment type="sequence caution" evidence="9">
    <conflict type="erroneous initiation">
        <sequence resource="EMBL-CDS" id="AAM50035"/>
    </conflict>
    <text>Truncated N-terminus.</text>
</comment>
<comment type="sequence caution" evidence="9">
    <conflict type="miscellaneous discrepancy">
        <sequence resource="EMBL-CDS" id="AAM50035"/>
    </conflict>
    <text>Contaminating sequence. Potential poly-A sequence.</text>
</comment>
<proteinExistence type="evidence at transcript level"/>